<comment type="function">
    <text evidence="1">Catalyzes the reversible adenylation of nicotinate mononucleotide (NaMN) to nicotinic acid adenine dinucleotide (NaAD).</text>
</comment>
<comment type="catalytic activity">
    <reaction evidence="1">
        <text>nicotinate beta-D-ribonucleotide + ATP + H(+) = deamido-NAD(+) + diphosphate</text>
        <dbReference type="Rhea" id="RHEA:22860"/>
        <dbReference type="ChEBI" id="CHEBI:15378"/>
        <dbReference type="ChEBI" id="CHEBI:30616"/>
        <dbReference type="ChEBI" id="CHEBI:33019"/>
        <dbReference type="ChEBI" id="CHEBI:57502"/>
        <dbReference type="ChEBI" id="CHEBI:58437"/>
        <dbReference type="EC" id="2.7.7.18"/>
    </reaction>
</comment>
<comment type="pathway">
    <text evidence="1">Cofactor biosynthesis; NAD(+) biosynthesis; deamido-NAD(+) from nicotinate D-ribonucleotide: step 1/1.</text>
</comment>
<comment type="similarity">
    <text evidence="1">Belongs to the NadD family.</text>
</comment>
<keyword id="KW-0067">ATP-binding</keyword>
<keyword id="KW-0520">NAD</keyword>
<keyword id="KW-0547">Nucleotide-binding</keyword>
<keyword id="KW-0548">Nucleotidyltransferase</keyword>
<keyword id="KW-0662">Pyridine nucleotide biosynthesis</keyword>
<keyword id="KW-0808">Transferase</keyword>
<protein>
    <recommendedName>
        <fullName evidence="1">Probable nicotinate-nucleotide adenylyltransferase</fullName>
        <ecNumber evidence="1">2.7.7.18</ecNumber>
    </recommendedName>
    <alternativeName>
        <fullName evidence="1">Deamido-NAD(+) diphosphorylase</fullName>
    </alternativeName>
    <alternativeName>
        <fullName evidence="1">Deamido-NAD(+) pyrophosphorylase</fullName>
    </alternativeName>
    <alternativeName>
        <fullName evidence="1">Nicotinate mononucleotide adenylyltransferase</fullName>
        <shortName evidence="1">NaMN adenylyltransferase</shortName>
    </alternativeName>
</protein>
<feature type="chain" id="PRO_1000071837" description="Probable nicotinate-nucleotide adenylyltransferase">
    <location>
        <begin position="1"/>
        <end position="204"/>
    </location>
</feature>
<organism>
    <name type="scientific">Dehalococcoides mccartyi (strain ATCC BAA-2266 / KCTC 15142 / 195)</name>
    <name type="common">Dehalococcoides ethenogenes (strain 195)</name>
    <dbReference type="NCBI Taxonomy" id="243164"/>
    <lineage>
        <taxon>Bacteria</taxon>
        <taxon>Bacillati</taxon>
        <taxon>Chloroflexota</taxon>
        <taxon>Dehalococcoidia</taxon>
        <taxon>Dehalococcoidales</taxon>
        <taxon>Dehalococcoidaceae</taxon>
        <taxon>Dehalococcoides</taxon>
    </lineage>
</organism>
<dbReference type="EC" id="2.7.7.18" evidence="1"/>
<dbReference type="EMBL" id="CP000027">
    <property type="protein sequence ID" value="AAW39182.1"/>
    <property type="molecule type" value="Genomic_DNA"/>
</dbReference>
<dbReference type="RefSeq" id="WP_010935813.1">
    <property type="nucleotide sequence ID" value="NC_002936.3"/>
</dbReference>
<dbReference type="SMR" id="Q3ZAJ1"/>
<dbReference type="FunCoup" id="Q3ZAJ1">
    <property type="interactions" value="279"/>
</dbReference>
<dbReference type="STRING" id="243164.DET0003"/>
<dbReference type="GeneID" id="3229140"/>
<dbReference type="KEGG" id="det:DET0003"/>
<dbReference type="PATRIC" id="fig|243164.10.peg.3"/>
<dbReference type="eggNOG" id="COG1057">
    <property type="taxonomic scope" value="Bacteria"/>
</dbReference>
<dbReference type="HOGENOM" id="CLU_069765_1_1_0"/>
<dbReference type="InParanoid" id="Q3ZAJ1"/>
<dbReference type="UniPathway" id="UPA00253">
    <property type="reaction ID" value="UER00332"/>
</dbReference>
<dbReference type="Proteomes" id="UP000008289">
    <property type="component" value="Chromosome"/>
</dbReference>
<dbReference type="GO" id="GO:0005524">
    <property type="term" value="F:ATP binding"/>
    <property type="evidence" value="ECO:0007669"/>
    <property type="project" value="UniProtKB-KW"/>
</dbReference>
<dbReference type="GO" id="GO:0004515">
    <property type="term" value="F:nicotinate-nucleotide adenylyltransferase activity"/>
    <property type="evidence" value="ECO:0007669"/>
    <property type="project" value="UniProtKB-UniRule"/>
</dbReference>
<dbReference type="GO" id="GO:0009435">
    <property type="term" value="P:NAD biosynthetic process"/>
    <property type="evidence" value="ECO:0007669"/>
    <property type="project" value="UniProtKB-UniRule"/>
</dbReference>
<dbReference type="CDD" id="cd02165">
    <property type="entry name" value="NMNAT"/>
    <property type="match status" value="1"/>
</dbReference>
<dbReference type="Gene3D" id="3.40.50.620">
    <property type="entry name" value="HUPs"/>
    <property type="match status" value="1"/>
</dbReference>
<dbReference type="HAMAP" id="MF_00244">
    <property type="entry name" value="NaMN_adenylyltr"/>
    <property type="match status" value="1"/>
</dbReference>
<dbReference type="InterPro" id="IPR004821">
    <property type="entry name" value="Cyt_trans-like"/>
</dbReference>
<dbReference type="InterPro" id="IPR005248">
    <property type="entry name" value="NadD/NMNAT"/>
</dbReference>
<dbReference type="InterPro" id="IPR014729">
    <property type="entry name" value="Rossmann-like_a/b/a_fold"/>
</dbReference>
<dbReference type="NCBIfam" id="TIGR00125">
    <property type="entry name" value="cyt_tran_rel"/>
    <property type="match status" value="1"/>
</dbReference>
<dbReference type="NCBIfam" id="TIGR00482">
    <property type="entry name" value="nicotinate (nicotinamide) nucleotide adenylyltransferase"/>
    <property type="match status" value="1"/>
</dbReference>
<dbReference type="NCBIfam" id="NF000840">
    <property type="entry name" value="PRK00071.1-3"/>
    <property type="match status" value="1"/>
</dbReference>
<dbReference type="PANTHER" id="PTHR39321">
    <property type="entry name" value="NICOTINATE-NUCLEOTIDE ADENYLYLTRANSFERASE-RELATED"/>
    <property type="match status" value="1"/>
</dbReference>
<dbReference type="PANTHER" id="PTHR39321:SF3">
    <property type="entry name" value="PHOSPHOPANTETHEINE ADENYLYLTRANSFERASE"/>
    <property type="match status" value="1"/>
</dbReference>
<dbReference type="Pfam" id="PF01467">
    <property type="entry name" value="CTP_transf_like"/>
    <property type="match status" value="1"/>
</dbReference>
<dbReference type="SUPFAM" id="SSF52374">
    <property type="entry name" value="Nucleotidylyl transferase"/>
    <property type="match status" value="1"/>
</dbReference>
<proteinExistence type="inferred from homology"/>
<name>NADD_DEHM1</name>
<accession>Q3ZAJ1</accession>
<evidence type="ECO:0000255" key="1">
    <source>
        <dbReference type="HAMAP-Rule" id="MF_00244"/>
    </source>
</evidence>
<sequence length="204" mass="22877">MVSLKTGILGGTFDPIHTGHLILAEEVKKRLGLDEIIFIPTGQPYYKADKTISPAADRLNMVKLAISGKPYFRVMDIEIKRSGPTYTADTLNDLKLILPEKTELYFILGWDNLEALPRWHKASEIIRLCQLVAVPRIGQAKPDVDELDDKLPGLQQSLIMLSKPEVDVSSSLVRERLENGQGVEHLVPEAVAAYIKEHGLYHRQ</sequence>
<gene>
    <name evidence="1" type="primary">nadD</name>
    <name type="ordered locus">DET0003</name>
</gene>
<reference key="1">
    <citation type="journal article" date="2005" name="Science">
        <title>Genome sequence of the PCE-dechlorinating bacterium Dehalococcoides ethenogenes.</title>
        <authorList>
            <person name="Seshadri R."/>
            <person name="Adrian L."/>
            <person name="Fouts D.E."/>
            <person name="Eisen J.A."/>
            <person name="Phillippy A.M."/>
            <person name="Methe B.A."/>
            <person name="Ward N.L."/>
            <person name="Nelson W.C."/>
            <person name="DeBoy R.T."/>
            <person name="Khouri H.M."/>
            <person name="Kolonay J.F."/>
            <person name="Dodson R.J."/>
            <person name="Daugherty S.C."/>
            <person name="Brinkac L.M."/>
            <person name="Sullivan S.A."/>
            <person name="Madupu R."/>
            <person name="Nelson K.E."/>
            <person name="Kang K.H."/>
            <person name="Impraim M."/>
            <person name="Tran K."/>
            <person name="Robinson J.M."/>
            <person name="Forberger H.A."/>
            <person name="Fraser C.M."/>
            <person name="Zinder S.H."/>
            <person name="Heidelberg J.F."/>
        </authorList>
    </citation>
    <scope>NUCLEOTIDE SEQUENCE [LARGE SCALE GENOMIC DNA]</scope>
    <source>
        <strain>ATCC BAA-2266 / KCTC 15142 / 195</strain>
    </source>
</reference>